<comment type="function">
    <text evidence="1">Essential cell division protein that coordinates cell division and chromosome segregation. The N-terminus is involved in assembly of the cell-division machinery. The C-terminus functions as a DNA motor that moves dsDNA in an ATP-dependent manner towards the dif recombination site, which is located within the replication terminus region. Required for activation of the Xer recombinase, allowing activation of chromosome unlinking by recombination (By similarity).</text>
</comment>
<comment type="subunit">
    <text evidence="1">Homohexamer. Forms a ring that surrounds DNA (By similarity).</text>
</comment>
<comment type="subcellular location">
    <subcellularLocation>
        <location evidence="1">Cell inner membrane</location>
        <topology evidence="1">Multi-pass membrane protein</topology>
    </subcellularLocation>
    <text evidence="1">Located at the septum.</text>
</comment>
<comment type="domain">
    <text evidence="1">Consists of an N-terminal domain, which is sufficient for the localization to the septal ring and is required for cell division, followed by a linker domain, and a C-terminal domain, which forms the translocation motor involved in chromosome segregation. The C-terminal domain can be further subdivided into alpha, beta and gamma subdomains. The alpha and beta subdomains form the DNA pump, and the gamma subdomain is a regulatory subdomain (By similarity).</text>
</comment>
<comment type="similarity">
    <text evidence="5">Belongs to the FtsK/SpoIIIE/SftA family.</text>
</comment>
<accession>O83964</accession>
<proteinExistence type="inferred from homology"/>
<reference key="1">
    <citation type="journal article" date="1998" name="Science">
        <title>Complete genome sequence of Treponema pallidum, the syphilis spirochete.</title>
        <authorList>
            <person name="Fraser C.M."/>
            <person name="Norris S.J."/>
            <person name="Weinstock G.M."/>
            <person name="White O."/>
            <person name="Sutton G.G."/>
            <person name="Dodson R.J."/>
            <person name="Gwinn M.L."/>
            <person name="Hickey E.K."/>
            <person name="Clayton R.A."/>
            <person name="Ketchum K.A."/>
            <person name="Sodergren E."/>
            <person name="Hardham J.M."/>
            <person name="McLeod M.P."/>
            <person name="Salzberg S.L."/>
            <person name="Peterson J.D."/>
            <person name="Khalak H.G."/>
            <person name="Richardson D.L."/>
            <person name="Howell J.K."/>
            <person name="Chidambaram M."/>
            <person name="Utterback T.R."/>
            <person name="McDonald L.A."/>
            <person name="Artiach P."/>
            <person name="Bowman C."/>
            <person name="Cotton M.D."/>
            <person name="Fujii C."/>
            <person name="Garland S.A."/>
            <person name="Hatch B."/>
            <person name="Horst K."/>
            <person name="Roberts K.M."/>
            <person name="Sandusky M."/>
            <person name="Weidman J.F."/>
            <person name="Smith H.O."/>
            <person name="Venter J.C."/>
        </authorList>
    </citation>
    <scope>NUCLEOTIDE SEQUENCE [LARGE SCALE GENOMIC DNA]</scope>
    <source>
        <strain>Nichols</strain>
    </source>
</reference>
<organism>
    <name type="scientific">Treponema pallidum (strain Nichols)</name>
    <dbReference type="NCBI Taxonomy" id="243276"/>
    <lineage>
        <taxon>Bacteria</taxon>
        <taxon>Pseudomonadati</taxon>
        <taxon>Spirochaetota</taxon>
        <taxon>Spirochaetia</taxon>
        <taxon>Spirochaetales</taxon>
        <taxon>Treponemataceae</taxon>
        <taxon>Treponema</taxon>
    </lineage>
</organism>
<protein>
    <recommendedName>
        <fullName>DNA translocase FtsK</fullName>
    </recommendedName>
</protein>
<evidence type="ECO:0000250" key="1"/>
<evidence type="ECO:0000255" key="2"/>
<evidence type="ECO:0000255" key="3">
    <source>
        <dbReference type="PROSITE-ProRule" id="PRU00289"/>
    </source>
</evidence>
<evidence type="ECO:0000256" key="4">
    <source>
        <dbReference type="SAM" id="MobiDB-lite"/>
    </source>
</evidence>
<evidence type="ECO:0000305" key="5"/>
<keyword id="KW-0067">ATP-binding</keyword>
<keyword id="KW-0131">Cell cycle</keyword>
<keyword id="KW-0132">Cell division</keyword>
<keyword id="KW-0997">Cell inner membrane</keyword>
<keyword id="KW-1003">Cell membrane</keyword>
<keyword id="KW-0159">Chromosome partition</keyword>
<keyword id="KW-0238">DNA-binding</keyword>
<keyword id="KW-0472">Membrane</keyword>
<keyword id="KW-0547">Nucleotide-binding</keyword>
<keyword id="KW-1185">Reference proteome</keyword>
<keyword id="KW-0812">Transmembrane</keyword>
<keyword id="KW-1133">Transmembrane helix</keyword>
<name>FTSK_TREPA</name>
<sequence>MERSPLPRIIALTFGTLLFVSAVLLTLSTFLPLFTLHRASHWFFVPGTLLYETYAFSSLLVPLLLLHTALLLFVGGRSLRAESALVAFPLLFITAVCGEHGLYALRRALAARSISPSTRGGIDIVCVLCLLALLGAELYAALIYGERCYVWFHARIPRDFIADGFQDPSFPPSTADHPDTVSPPPAPSCATADVQTPEASAPPEGQFSTEVPLQGGEFLISEAEVQPATQVAACGGVSTPTALAPSVPSQAPFPLLPAPGLIQSNLPSDVHAPASPGSLPSVIPAQAPCVMALSPISAPSVAPAETLIPAQDDEQGPPRPIPASAAPLRHPCRGYQVPYDLLDQYSEDTYEGIDELTKNLALLLEETFSEFNIRVEITGIKKGPVVTMFELLPPPGIKLSKITNLQDNVALKLAASSVRIVAPIPGKHAIGVEVPNKKRSLVTFKELLHTRTAGSNRMAIPVILGKDVTGEPQVIDLAQTPHLLIAGATGSGKSVCVNALILSILYHKCPDETKLLLIDPKIVELKLYNDIAHLLTPVITEPKRALQALQYILCEMERRYALLEQLECRDIKTYNKKIQEKSIATQPLPFIVIIIDEFADLMVASGKELETSVARLCAMSRAVGIHLVLATQRPSIDVITGLIKANIPSRIAFMVSSKMDSRIILDEMGAEKLLGRGDMLYMNPSQSFPTRIQGAYVSERELARVIAHVRAWGTPEYLDEEIFFDDDDASISGNFVDESDPLYEQAVQVVQYAGKASTSYVQRKLKIGYNRAARLIEEMEARGVVGPPNGSKPRDVLRS</sequence>
<gene>
    <name type="primary">ftsK</name>
    <name type="ordered locus">TP_0999</name>
</gene>
<dbReference type="EMBL" id="AE000520">
    <property type="protein sequence ID" value="AAC26587.1"/>
    <property type="molecule type" value="Genomic_DNA"/>
</dbReference>
<dbReference type="PIR" id="H71255">
    <property type="entry name" value="H71255"/>
</dbReference>
<dbReference type="RefSeq" id="WP_010882443.1">
    <property type="nucleotide sequence ID" value="NC_021490.2"/>
</dbReference>
<dbReference type="SMR" id="O83964"/>
<dbReference type="STRING" id="243276.TP_0999"/>
<dbReference type="EnsemblBacteria" id="AAC26587">
    <property type="protein sequence ID" value="AAC26587"/>
    <property type="gene ID" value="TP_0999"/>
</dbReference>
<dbReference type="KEGG" id="tpa:TP_0999"/>
<dbReference type="KEGG" id="tpw:TPANIC_0999"/>
<dbReference type="eggNOG" id="COG1674">
    <property type="taxonomic scope" value="Bacteria"/>
</dbReference>
<dbReference type="HOGENOM" id="CLU_001981_11_2_12"/>
<dbReference type="OrthoDB" id="9807790at2"/>
<dbReference type="Proteomes" id="UP000000811">
    <property type="component" value="Chromosome"/>
</dbReference>
<dbReference type="GO" id="GO:0005886">
    <property type="term" value="C:plasma membrane"/>
    <property type="evidence" value="ECO:0007669"/>
    <property type="project" value="UniProtKB-SubCell"/>
</dbReference>
<dbReference type="GO" id="GO:0005524">
    <property type="term" value="F:ATP binding"/>
    <property type="evidence" value="ECO:0007669"/>
    <property type="project" value="UniProtKB-KW"/>
</dbReference>
<dbReference type="GO" id="GO:0016887">
    <property type="term" value="F:ATP hydrolysis activity"/>
    <property type="evidence" value="ECO:0007669"/>
    <property type="project" value="InterPro"/>
</dbReference>
<dbReference type="GO" id="GO:0003677">
    <property type="term" value="F:DNA binding"/>
    <property type="evidence" value="ECO:0007669"/>
    <property type="project" value="UniProtKB-KW"/>
</dbReference>
<dbReference type="GO" id="GO:0051301">
    <property type="term" value="P:cell division"/>
    <property type="evidence" value="ECO:0007669"/>
    <property type="project" value="UniProtKB-KW"/>
</dbReference>
<dbReference type="GO" id="GO:0007059">
    <property type="term" value="P:chromosome segregation"/>
    <property type="evidence" value="ECO:0007669"/>
    <property type="project" value="UniProtKB-KW"/>
</dbReference>
<dbReference type="CDD" id="cd01127">
    <property type="entry name" value="TrwB_TraG_TraD_VirD4"/>
    <property type="match status" value="1"/>
</dbReference>
<dbReference type="Gene3D" id="3.30.980.40">
    <property type="match status" value="1"/>
</dbReference>
<dbReference type="Gene3D" id="3.40.50.300">
    <property type="entry name" value="P-loop containing nucleotide triphosphate hydrolases"/>
    <property type="match status" value="1"/>
</dbReference>
<dbReference type="Gene3D" id="1.10.10.10">
    <property type="entry name" value="Winged helix-like DNA-binding domain superfamily/Winged helix DNA-binding domain"/>
    <property type="match status" value="1"/>
</dbReference>
<dbReference type="InterPro" id="IPR003593">
    <property type="entry name" value="AAA+_ATPase"/>
</dbReference>
<dbReference type="InterPro" id="IPR050206">
    <property type="entry name" value="FtsK/SpoIIIE/SftA"/>
</dbReference>
<dbReference type="InterPro" id="IPR041027">
    <property type="entry name" value="FtsK_alpha"/>
</dbReference>
<dbReference type="InterPro" id="IPR002543">
    <property type="entry name" value="FtsK_dom"/>
</dbReference>
<dbReference type="InterPro" id="IPR018541">
    <property type="entry name" value="Ftsk_gamma"/>
</dbReference>
<dbReference type="InterPro" id="IPR027417">
    <property type="entry name" value="P-loop_NTPase"/>
</dbReference>
<dbReference type="InterPro" id="IPR036388">
    <property type="entry name" value="WH-like_DNA-bd_sf"/>
</dbReference>
<dbReference type="InterPro" id="IPR036390">
    <property type="entry name" value="WH_DNA-bd_sf"/>
</dbReference>
<dbReference type="PANTHER" id="PTHR22683:SF41">
    <property type="entry name" value="DNA TRANSLOCASE FTSK"/>
    <property type="match status" value="1"/>
</dbReference>
<dbReference type="PANTHER" id="PTHR22683">
    <property type="entry name" value="SPORULATION PROTEIN RELATED"/>
    <property type="match status" value="1"/>
</dbReference>
<dbReference type="Pfam" id="PF17854">
    <property type="entry name" value="FtsK_alpha"/>
    <property type="match status" value="1"/>
</dbReference>
<dbReference type="Pfam" id="PF09397">
    <property type="entry name" value="FtsK_gamma"/>
    <property type="match status" value="1"/>
</dbReference>
<dbReference type="Pfam" id="PF01580">
    <property type="entry name" value="FtsK_SpoIIIE"/>
    <property type="match status" value="1"/>
</dbReference>
<dbReference type="SMART" id="SM00382">
    <property type="entry name" value="AAA"/>
    <property type="match status" value="1"/>
</dbReference>
<dbReference type="SMART" id="SM00843">
    <property type="entry name" value="Ftsk_gamma"/>
    <property type="match status" value="1"/>
</dbReference>
<dbReference type="SUPFAM" id="SSF52540">
    <property type="entry name" value="P-loop containing nucleoside triphosphate hydrolases"/>
    <property type="match status" value="1"/>
</dbReference>
<dbReference type="SUPFAM" id="SSF46785">
    <property type="entry name" value="Winged helix' DNA-binding domain"/>
    <property type="match status" value="1"/>
</dbReference>
<dbReference type="PROSITE" id="PS50901">
    <property type="entry name" value="FTSK"/>
    <property type="match status" value="1"/>
</dbReference>
<feature type="chain" id="PRO_0000098313" description="DNA translocase FtsK">
    <location>
        <begin position="1"/>
        <end position="799"/>
    </location>
</feature>
<feature type="transmembrane region" description="Helical" evidence="2">
    <location>
        <begin position="14"/>
        <end position="34"/>
    </location>
</feature>
<feature type="transmembrane region" description="Helical" evidence="2">
    <location>
        <begin position="55"/>
        <end position="75"/>
    </location>
</feature>
<feature type="transmembrane region" description="Helical" evidence="2">
    <location>
        <begin position="85"/>
        <end position="105"/>
    </location>
</feature>
<feature type="transmembrane region" description="Helical" evidence="2">
    <location>
        <begin position="124"/>
        <end position="144"/>
    </location>
</feature>
<feature type="topological domain" description="Cytoplasmic" evidence="2">
    <location>
        <begin position="145"/>
        <end position="799"/>
    </location>
</feature>
<feature type="domain" description="FtsK" evidence="3">
    <location>
        <begin position="470"/>
        <end position="662"/>
    </location>
</feature>
<feature type="region of interest" description="Disordered" evidence="4">
    <location>
        <begin position="167"/>
        <end position="208"/>
    </location>
</feature>
<feature type="binding site" evidence="3">
    <location>
        <begin position="490"/>
        <end position="495"/>
    </location>
    <ligand>
        <name>ATP</name>
        <dbReference type="ChEBI" id="CHEBI:30616"/>
    </ligand>
</feature>